<name>GP1BB_MOUSE</name>
<comment type="function">
    <text evidence="1">Gp-Ib, a surface membrane protein of platelets, participates in the formation of platelet plugs by binding to von Willebrand factor, which is already bound to the subendothelium.</text>
</comment>
<comment type="subunit">
    <text evidence="1">Two GP-Ib beta are disulfide-linked to one GP-Ib alpha. GP-IX is complexed with the GP-Ib heterodimer via a non covalent linkage. Interacts with TRAF4 (By similarity).</text>
</comment>
<comment type="subcellular location">
    <subcellularLocation>
        <location>Membrane</location>
        <topology>Single-pass type I membrane protein</topology>
    </subcellularLocation>
</comment>
<comment type="miscellaneous">
    <text>Platelet activation apparently involves disruption of the macromolecular complex of GP-Ib with the platelet glycoprotein IX (GP-IX) and dissociation of GP-Ib from the actin-binding protein.</text>
</comment>
<keyword id="KW-0094">Blood coagulation</keyword>
<keyword id="KW-0130">Cell adhesion</keyword>
<keyword id="KW-1015">Disulfide bond</keyword>
<keyword id="KW-0325">Glycoprotein</keyword>
<keyword id="KW-0356">Hemostasis</keyword>
<keyword id="KW-0433">Leucine-rich repeat</keyword>
<keyword id="KW-0472">Membrane</keyword>
<keyword id="KW-0597">Phosphoprotein</keyword>
<keyword id="KW-1185">Reference proteome</keyword>
<keyword id="KW-0732">Signal</keyword>
<keyword id="KW-0812">Transmembrane</keyword>
<keyword id="KW-1133">Transmembrane helix</keyword>
<gene>
    <name type="primary">Gp1bb</name>
</gene>
<organism>
    <name type="scientific">Mus musculus</name>
    <name type="common">Mouse</name>
    <dbReference type="NCBI Taxonomy" id="10090"/>
    <lineage>
        <taxon>Eukaryota</taxon>
        <taxon>Metazoa</taxon>
        <taxon>Chordata</taxon>
        <taxon>Craniata</taxon>
        <taxon>Vertebrata</taxon>
        <taxon>Euteleostomi</taxon>
        <taxon>Mammalia</taxon>
        <taxon>Eutheria</taxon>
        <taxon>Euarchontoglires</taxon>
        <taxon>Glires</taxon>
        <taxon>Rodentia</taxon>
        <taxon>Myomorpha</taxon>
        <taxon>Muroidea</taxon>
        <taxon>Muridae</taxon>
        <taxon>Murinae</taxon>
        <taxon>Mus</taxon>
        <taxon>Mus</taxon>
    </lineage>
</organism>
<evidence type="ECO:0000250" key="1"/>
<evidence type="ECO:0000255" key="2"/>
<evidence type="ECO:0007744" key="3">
    <source>
    </source>
</evidence>
<evidence type="ECO:0007744" key="4">
    <source>
    </source>
</evidence>
<reference key="1">
    <citation type="journal article" date="1997" name="Thromb. Res.">
        <title>Characterization of the gene encoding mouse platelet glycoprotein Ib beta.</title>
        <authorList>
            <person name="Kitaguchi T."/>
            <person name="Murata M."/>
            <person name="Anbo H."/>
            <person name="Moriki T."/>
            <person name="Ikeda Y."/>
        </authorList>
    </citation>
    <scope>NUCLEOTIDE SEQUENCE [GENOMIC DNA]</scope>
</reference>
<reference key="2">
    <citation type="journal article" date="2007" name="Proc. Natl. Acad. Sci. U.S.A.">
        <title>Large-scale phosphorylation analysis of mouse liver.</title>
        <authorList>
            <person name="Villen J."/>
            <person name="Beausoleil S.A."/>
            <person name="Gerber S.A."/>
            <person name="Gygi S.P."/>
        </authorList>
    </citation>
    <scope>PHOSPHORYLATION [LARGE SCALE ANALYSIS] AT SER-186</scope>
    <scope>IDENTIFICATION BY MASS SPECTROMETRY [LARGE SCALE ANALYSIS]</scope>
    <source>
        <tissue>Liver</tissue>
    </source>
</reference>
<reference key="3">
    <citation type="journal article" date="2010" name="Cell">
        <title>A tissue-specific atlas of mouse protein phosphorylation and expression.</title>
        <authorList>
            <person name="Huttlin E.L."/>
            <person name="Jedrychowski M.P."/>
            <person name="Elias J.E."/>
            <person name="Goswami T."/>
            <person name="Rad R."/>
            <person name="Beausoleil S.A."/>
            <person name="Villen J."/>
            <person name="Haas W."/>
            <person name="Sowa M.E."/>
            <person name="Gygi S.P."/>
        </authorList>
    </citation>
    <scope>PHOSPHORYLATION [LARGE SCALE ANALYSIS] AT SER-186; SER-191; THR-193 AND SER-200</scope>
    <scope>IDENTIFICATION BY MASS SPECTROMETRY [LARGE SCALE ANALYSIS]</scope>
    <source>
        <tissue>Brown adipose tissue</tissue>
        <tissue>Heart</tissue>
        <tissue>Kidney</tissue>
        <tissue>Liver</tissue>
        <tissue>Lung</tissue>
        <tissue>Pancreas</tissue>
        <tissue>Spleen</tissue>
    </source>
</reference>
<proteinExistence type="evidence at protein level"/>
<feature type="signal peptide" evidence="1">
    <location>
        <begin position="1"/>
        <end position="26"/>
    </location>
</feature>
<feature type="chain" id="PRO_0000021346" description="Platelet glycoprotein Ib beta chain">
    <location>
        <begin position="27"/>
        <end position="206"/>
    </location>
</feature>
<feature type="topological domain" description="Extracellular" evidence="2">
    <location>
        <begin position="27"/>
        <end position="147"/>
    </location>
</feature>
<feature type="transmembrane region" description="Helical" evidence="2">
    <location>
        <begin position="148"/>
        <end position="172"/>
    </location>
</feature>
<feature type="topological domain" description="Cytoplasmic" evidence="2">
    <location>
        <begin position="173"/>
        <end position="206"/>
    </location>
</feature>
<feature type="domain" description="LRRNT">
    <location>
        <begin position="27"/>
        <end position="55"/>
    </location>
</feature>
<feature type="repeat" description="LRR">
    <location>
        <begin position="60"/>
        <end position="83"/>
    </location>
</feature>
<feature type="domain" description="LRRCT">
    <location>
        <begin position="89"/>
        <end position="143"/>
    </location>
</feature>
<feature type="modified residue" description="Phosphoserine" evidence="3 4">
    <location>
        <position position="186"/>
    </location>
</feature>
<feature type="modified residue" description="Phosphoserine" evidence="4">
    <location>
        <position position="191"/>
    </location>
</feature>
<feature type="modified residue" description="Phosphothreonine" evidence="4">
    <location>
        <position position="193"/>
    </location>
</feature>
<feature type="modified residue" description="Phosphoserine" evidence="4">
    <location>
        <position position="200"/>
    </location>
</feature>
<feature type="glycosylation site" description="N-linked (GlcNAc...) asparagine" evidence="2">
    <location>
        <position position="66"/>
    </location>
</feature>
<feature type="disulfide bond" evidence="1">
    <location>
        <begin position="26"/>
        <end position="32"/>
    </location>
</feature>
<feature type="disulfide bond" evidence="1">
    <location>
        <begin position="30"/>
        <end position="39"/>
    </location>
</feature>
<feature type="disulfide bond" evidence="1">
    <location>
        <begin position="93"/>
        <end position="118"/>
    </location>
</feature>
<feature type="disulfide bond" evidence="1">
    <location>
        <begin position="95"/>
        <end position="141"/>
    </location>
</feature>
<feature type="disulfide bond" description="Interchain (with C-608 or C-609 in GP1BA)" evidence="1">
    <location>
        <position position="147"/>
    </location>
</feature>
<dbReference type="EMBL" id="AB001419">
    <property type="protein sequence ID" value="BAA22424.1"/>
    <property type="molecule type" value="Genomic_DNA"/>
</dbReference>
<dbReference type="CCDS" id="CCDS49787.1"/>
<dbReference type="RefSeq" id="NP_034457.1">
    <property type="nucleotide sequence ID" value="NM_010327.2"/>
</dbReference>
<dbReference type="SMR" id="P56400"/>
<dbReference type="BioGRID" id="200004">
    <property type="interactions" value="1"/>
</dbReference>
<dbReference type="ComplexPortal" id="CPX-115">
    <property type="entry name" value="Glycoprotein Ib-IX-V complex"/>
</dbReference>
<dbReference type="ComplexPortal" id="CPX-118">
    <property type="entry name" value="Glycoprotein Ib-IX-V-Filamin-A complex"/>
</dbReference>
<dbReference type="FunCoup" id="P56400">
    <property type="interactions" value="421"/>
</dbReference>
<dbReference type="STRING" id="10090.ENSMUSP00000059270"/>
<dbReference type="GlyCosmos" id="P56400">
    <property type="glycosylation" value="1 site, No reported glycans"/>
</dbReference>
<dbReference type="GlyGen" id="P56400">
    <property type="glycosylation" value="1 site"/>
</dbReference>
<dbReference type="iPTMnet" id="P56400"/>
<dbReference type="PhosphoSitePlus" id="P56400"/>
<dbReference type="PaxDb" id="10090-ENSMUSP00000059270"/>
<dbReference type="ProteomicsDB" id="271259"/>
<dbReference type="Antibodypedia" id="44871">
    <property type="antibodies" value="147 antibodies from 28 providers"/>
</dbReference>
<dbReference type="Ensembl" id="ENSMUST00000167388.3">
    <property type="protein sequence ID" value="ENSMUSP00000126292.2"/>
    <property type="gene ID" value="ENSMUSG00000050761.5"/>
</dbReference>
<dbReference type="GeneID" id="14724"/>
<dbReference type="KEGG" id="mmu:14724"/>
<dbReference type="UCSC" id="uc007yoi.1">
    <property type="organism name" value="mouse"/>
</dbReference>
<dbReference type="AGR" id="MGI:107852"/>
<dbReference type="CTD" id="2812"/>
<dbReference type="MGI" id="MGI:107852">
    <property type="gene designation" value="Gp1bb"/>
</dbReference>
<dbReference type="VEuPathDB" id="HostDB:ENSMUSG00000050761"/>
<dbReference type="eggNOG" id="KOG0619">
    <property type="taxonomic scope" value="Eukaryota"/>
</dbReference>
<dbReference type="GeneTree" id="ENSGT00530000064244"/>
<dbReference type="HOGENOM" id="CLU_094615_0_0_1"/>
<dbReference type="InParanoid" id="P56400"/>
<dbReference type="OrthoDB" id="676979at2759"/>
<dbReference type="PhylomeDB" id="P56400"/>
<dbReference type="Reactome" id="R-MMU-140837">
    <property type="pathway name" value="Intrinsic Pathway of Fibrin Clot Formation"/>
</dbReference>
<dbReference type="Reactome" id="R-MMU-430116">
    <property type="pathway name" value="GP1b-IX-V activation signalling"/>
</dbReference>
<dbReference type="Reactome" id="R-MMU-75892">
    <property type="pathway name" value="Platelet Adhesion to exposed collagen"/>
</dbReference>
<dbReference type="Reactome" id="R-MMU-76009">
    <property type="pathway name" value="Platelet Aggregation (Plug Formation)"/>
</dbReference>
<dbReference type="BioGRID-ORCS" id="14724">
    <property type="hits" value="5 hits in 79 CRISPR screens"/>
</dbReference>
<dbReference type="PRO" id="PR:P56400"/>
<dbReference type="Proteomes" id="UP000000589">
    <property type="component" value="Chromosome 16"/>
</dbReference>
<dbReference type="RNAct" id="P56400">
    <property type="molecule type" value="protein"/>
</dbReference>
<dbReference type="Bgee" id="ENSMUSG00000050761">
    <property type="expression patterns" value="Expressed in ileum and 60 other cell types or tissues"/>
</dbReference>
<dbReference type="ExpressionAtlas" id="P56400">
    <property type="expression patterns" value="baseline and differential"/>
</dbReference>
<dbReference type="GO" id="GO:1990779">
    <property type="term" value="C:glycoprotein Ib-IX-V complex"/>
    <property type="evidence" value="ECO:0000266"/>
    <property type="project" value="ComplexPortal"/>
</dbReference>
<dbReference type="GO" id="GO:0005886">
    <property type="term" value="C:plasma membrane"/>
    <property type="evidence" value="ECO:0000250"/>
    <property type="project" value="MGI"/>
</dbReference>
<dbReference type="GO" id="GO:0007596">
    <property type="term" value="P:blood coagulation"/>
    <property type="evidence" value="ECO:0000314"/>
    <property type="project" value="ComplexPortal"/>
</dbReference>
<dbReference type="GO" id="GO:0007597">
    <property type="term" value="P:blood coagulation, intrinsic pathway"/>
    <property type="evidence" value="ECO:0000266"/>
    <property type="project" value="ComplexPortal"/>
</dbReference>
<dbReference type="GO" id="GO:0007155">
    <property type="term" value="P:cell adhesion"/>
    <property type="evidence" value="ECO:0000250"/>
    <property type="project" value="MGI"/>
</dbReference>
<dbReference type="GO" id="GO:0035855">
    <property type="term" value="P:megakaryocyte development"/>
    <property type="evidence" value="ECO:0000315"/>
    <property type="project" value="ComplexPortal"/>
</dbReference>
<dbReference type="GO" id="GO:0010572">
    <property type="term" value="P:positive regulation of platelet activation"/>
    <property type="evidence" value="ECO:0000266"/>
    <property type="project" value="ComplexPortal"/>
</dbReference>
<dbReference type="GO" id="GO:0051209">
    <property type="term" value="P:release of sequestered calcium ion into cytosol"/>
    <property type="evidence" value="ECO:0000266"/>
    <property type="project" value="ComplexPortal"/>
</dbReference>
<dbReference type="FunFam" id="3.80.10.10:FF:000441">
    <property type="entry name" value="Platelet glycoprotein Ib beta chain"/>
    <property type="match status" value="1"/>
</dbReference>
<dbReference type="Gene3D" id="3.80.10.10">
    <property type="entry name" value="Ribonuclease Inhibitor"/>
    <property type="match status" value="1"/>
</dbReference>
<dbReference type="InterPro" id="IPR000483">
    <property type="entry name" value="Cys-rich_flank_reg_C"/>
</dbReference>
<dbReference type="InterPro" id="IPR052313">
    <property type="entry name" value="GPIb-IX-V_Complex"/>
</dbReference>
<dbReference type="InterPro" id="IPR032675">
    <property type="entry name" value="LRR_dom_sf"/>
</dbReference>
<dbReference type="InterPro" id="IPR000372">
    <property type="entry name" value="LRRNT"/>
</dbReference>
<dbReference type="PANTHER" id="PTHR22650">
    <property type="entry name" value="GLYCOPROTEIN IB BETA"/>
    <property type="match status" value="1"/>
</dbReference>
<dbReference type="PANTHER" id="PTHR22650:SF7">
    <property type="entry name" value="PLATELET GLYCOPROTEIN IB BETA CHAIN"/>
    <property type="match status" value="1"/>
</dbReference>
<dbReference type="Pfam" id="PF01462">
    <property type="entry name" value="LRRNT"/>
    <property type="match status" value="1"/>
</dbReference>
<dbReference type="SMART" id="SM00082">
    <property type="entry name" value="LRRCT"/>
    <property type="match status" value="1"/>
</dbReference>
<dbReference type="SMART" id="SM00013">
    <property type="entry name" value="LRRNT"/>
    <property type="match status" value="1"/>
</dbReference>
<dbReference type="SUPFAM" id="SSF52058">
    <property type="entry name" value="L domain-like"/>
    <property type="match status" value="1"/>
</dbReference>
<protein>
    <recommendedName>
        <fullName>Platelet glycoprotein Ib beta chain</fullName>
        <shortName>GP-Ib beta</shortName>
        <shortName>GPIb-beta</shortName>
        <shortName>GPIbB</shortName>
    </recommendedName>
    <cdAntigenName>CD42c</cdAntigenName>
</protein>
<sequence length="206" mass="21763">MGSRPRGALSLLLLLLALLSRPASGCPAPCSCAGTLVDCGRRGLTWASLPAAFPPDTTELVLTGNNLTALPPGLLDALPALRAAHLGANPWRCDCRLLPLRAWLAGRPERAPYRDLRCVAPPALRGRLLPYVAEDELRAACAPGLLCWGALVAQLALLVLGLLHALLLALLLGRLRRLRARARARSIQEFSLTAPLVAESARGGAS</sequence>
<accession>P56400</accession>